<gene>
    <name type="primary">HOX22</name>
    <name type="ordered locus">Os04g0541700</name>
    <name type="ordered locus">LOC_Os04g45810</name>
    <name type="ORF">OsJ_014981</name>
    <name type="ORF">OSJNBb0103I08.6</name>
</gene>
<proteinExistence type="evidence at transcript level"/>
<feature type="chain" id="PRO_0000331717" description="Homeobox-leucine zipper protein HOX22">
    <location>
        <begin position="1"/>
        <end position="276"/>
    </location>
</feature>
<feature type="DNA-binding region" description="Homeobox" evidence="2">
    <location>
        <begin position="70"/>
        <end position="130"/>
    </location>
</feature>
<feature type="region of interest" description="Leucine-zipper">
    <location>
        <begin position="129"/>
        <end position="173"/>
    </location>
</feature>
<feature type="region of interest" description="Disordered" evidence="3">
    <location>
        <begin position="170"/>
        <end position="212"/>
    </location>
</feature>
<feature type="compositionally biased region" description="Low complexity" evidence="3">
    <location>
        <begin position="182"/>
        <end position="197"/>
    </location>
</feature>
<feature type="sequence conflict" description="In Ref. 1; AAO72559." evidence="5" ref="1">
    <original>MN</original>
    <variation>HASD</variation>
    <location>
        <begin position="1"/>
        <end position="2"/>
    </location>
</feature>
<dbReference type="EMBL" id="AY224440">
    <property type="protein sequence ID" value="AAO72559.1"/>
    <property type="molecule type" value="mRNA"/>
</dbReference>
<dbReference type="EMBL" id="AL606695">
    <property type="protein sequence ID" value="CAD41267.1"/>
    <property type="status" value="ALT_INIT"/>
    <property type="molecule type" value="Genomic_DNA"/>
</dbReference>
<dbReference type="EMBL" id="AP008210">
    <property type="protein sequence ID" value="BAF15360.2"/>
    <property type="status" value="ALT_INIT"/>
    <property type="molecule type" value="Genomic_DNA"/>
</dbReference>
<dbReference type="EMBL" id="AP014960">
    <property type="status" value="NOT_ANNOTATED_CDS"/>
    <property type="molecule type" value="Genomic_DNA"/>
</dbReference>
<dbReference type="EMBL" id="CM000141">
    <property type="status" value="NOT_ANNOTATED_CDS"/>
    <property type="molecule type" value="Genomic_DNA"/>
</dbReference>
<dbReference type="EMBL" id="AY554030">
    <property type="protein sequence ID" value="AAS83418.1"/>
    <property type="molecule type" value="mRNA"/>
</dbReference>
<dbReference type="RefSeq" id="XP_015634133.1">
    <property type="nucleotide sequence ID" value="XM_015778647.1"/>
</dbReference>
<dbReference type="SMR" id="Q7XUJ5"/>
<dbReference type="IntAct" id="Q7XUJ5">
    <property type="interactions" value="1"/>
</dbReference>
<dbReference type="PaxDb" id="39947-Q7XUJ5"/>
<dbReference type="EnsemblPlants" id="Os04t0541700-02">
    <property type="protein sequence ID" value="Os04t0541700-02"/>
    <property type="gene ID" value="Os04g0541700"/>
</dbReference>
<dbReference type="Gramene" id="Os04t0541700-02">
    <property type="protein sequence ID" value="Os04t0541700-02"/>
    <property type="gene ID" value="Os04g0541700"/>
</dbReference>
<dbReference type="KEGG" id="dosa:Os04g0541700"/>
<dbReference type="eggNOG" id="KOG0483">
    <property type="taxonomic scope" value="Eukaryota"/>
</dbReference>
<dbReference type="HOGENOM" id="CLU_071718_0_0_1"/>
<dbReference type="InParanoid" id="Q7XUJ5"/>
<dbReference type="OrthoDB" id="6159439at2759"/>
<dbReference type="Proteomes" id="UP000000763">
    <property type="component" value="Chromosome 4"/>
</dbReference>
<dbReference type="Proteomes" id="UP000007752">
    <property type="component" value="Chromosome 4"/>
</dbReference>
<dbReference type="Proteomes" id="UP000059680">
    <property type="component" value="Chromosome 4"/>
</dbReference>
<dbReference type="ExpressionAtlas" id="Q7XUJ5">
    <property type="expression patterns" value="baseline and differential"/>
</dbReference>
<dbReference type="GO" id="GO:0005634">
    <property type="term" value="C:nucleus"/>
    <property type="evidence" value="ECO:0000318"/>
    <property type="project" value="GO_Central"/>
</dbReference>
<dbReference type="GO" id="GO:0000981">
    <property type="term" value="F:DNA-binding transcription factor activity, RNA polymerase II-specific"/>
    <property type="evidence" value="ECO:0007669"/>
    <property type="project" value="InterPro"/>
</dbReference>
<dbReference type="GO" id="GO:0043565">
    <property type="term" value="F:sequence-specific DNA binding"/>
    <property type="evidence" value="ECO:0000318"/>
    <property type="project" value="GO_Central"/>
</dbReference>
<dbReference type="GO" id="GO:0045893">
    <property type="term" value="P:positive regulation of DNA-templated transcription"/>
    <property type="evidence" value="ECO:0000318"/>
    <property type="project" value="GO_Central"/>
</dbReference>
<dbReference type="CDD" id="cd00086">
    <property type="entry name" value="homeodomain"/>
    <property type="match status" value="1"/>
</dbReference>
<dbReference type="FunFam" id="1.10.10.60:FF:000274">
    <property type="entry name" value="Homeobox-leucine zipper protein HOX24"/>
    <property type="match status" value="1"/>
</dbReference>
<dbReference type="Gene3D" id="1.10.10.60">
    <property type="entry name" value="Homeodomain-like"/>
    <property type="match status" value="1"/>
</dbReference>
<dbReference type="InterPro" id="IPR001356">
    <property type="entry name" value="HD"/>
</dbReference>
<dbReference type="InterPro" id="IPR045224">
    <property type="entry name" value="HDZip_class_I_plant"/>
</dbReference>
<dbReference type="InterPro" id="IPR017970">
    <property type="entry name" value="Homeobox_CS"/>
</dbReference>
<dbReference type="InterPro" id="IPR009057">
    <property type="entry name" value="Homeodomain-like_sf"/>
</dbReference>
<dbReference type="InterPro" id="IPR000047">
    <property type="entry name" value="HTH_motif"/>
</dbReference>
<dbReference type="InterPro" id="IPR003106">
    <property type="entry name" value="Leu_zip_homeo"/>
</dbReference>
<dbReference type="PANTHER" id="PTHR24326">
    <property type="entry name" value="HOMEOBOX-LEUCINE ZIPPER PROTEIN"/>
    <property type="match status" value="1"/>
</dbReference>
<dbReference type="PANTHER" id="PTHR24326:SF234">
    <property type="entry name" value="HOMEOBOX-LEUCINE ZIPPER PROTEIN HOX22"/>
    <property type="match status" value="1"/>
</dbReference>
<dbReference type="Pfam" id="PF02183">
    <property type="entry name" value="HALZ"/>
    <property type="match status" value="1"/>
</dbReference>
<dbReference type="Pfam" id="PF00046">
    <property type="entry name" value="Homeodomain"/>
    <property type="match status" value="1"/>
</dbReference>
<dbReference type="PRINTS" id="PR00031">
    <property type="entry name" value="HTHREPRESSR"/>
</dbReference>
<dbReference type="SMART" id="SM00389">
    <property type="entry name" value="HOX"/>
    <property type="match status" value="1"/>
</dbReference>
<dbReference type="SUPFAM" id="SSF46689">
    <property type="entry name" value="Homeodomain-like"/>
    <property type="match status" value="1"/>
</dbReference>
<dbReference type="PROSITE" id="PS00027">
    <property type="entry name" value="HOMEOBOX_1"/>
    <property type="match status" value="1"/>
</dbReference>
<dbReference type="PROSITE" id="PS50071">
    <property type="entry name" value="HOMEOBOX_2"/>
    <property type="match status" value="1"/>
</dbReference>
<name>HOX22_ORYSJ</name>
<protein>
    <recommendedName>
        <fullName>Homeobox-leucine zipper protein HOX22</fullName>
    </recommendedName>
    <alternativeName>
        <fullName>HD-ZIP protein HOX22</fullName>
    </alternativeName>
    <alternativeName>
        <fullName>Homeodomain transcription factor HOX22</fullName>
    </alternativeName>
    <alternativeName>
        <fullName>OsHox22</fullName>
    </alternativeName>
</protein>
<accession>Q7XUJ5</accession>
<accession>Q0JBC7</accession>
<accession>Q6Q7E2</accession>
<accession>Q84PC3</accession>
<organism>
    <name type="scientific">Oryza sativa subsp. japonica</name>
    <name type="common">Rice</name>
    <dbReference type="NCBI Taxonomy" id="39947"/>
    <lineage>
        <taxon>Eukaryota</taxon>
        <taxon>Viridiplantae</taxon>
        <taxon>Streptophyta</taxon>
        <taxon>Embryophyta</taxon>
        <taxon>Tracheophyta</taxon>
        <taxon>Spermatophyta</taxon>
        <taxon>Magnoliopsida</taxon>
        <taxon>Liliopsida</taxon>
        <taxon>Poales</taxon>
        <taxon>Poaceae</taxon>
        <taxon>BOP clade</taxon>
        <taxon>Oryzoideae</taxon>
        <taxon>Oryzeae</taxon>
        <taxon>Oryzinae</taxon>
        <taxon>Oryza</taxon>
        <taxon>Oryza sativa</taxon>
    </lineage>
</organism>
<sequence length="276" mass="30653">MNGRTQLASWARIAMDRGDHHHLQQQHQFLMPPPAPVVPPQLCMPAMMADEQYMDLGGGGAAAAPGRGGAGERKRRFTEEQIRSLESMFHAHHAKLEPREKAELARELGLQPRQVAIWFQNKRARWRSKQLEHDYAALRSKYDALHSRVESLKQEKLALTVQLHELRERLREREERSGNGGAATTAASSSSCNGSGSEEVDDDDDKRNAAAGCLDLEPPESCVLGGATCATPADVSVESDQCDDQLDYDEGLFPESFCATPELWEPWPLVEWNAVA</sequence>
<reference key="1">
    <citation type="journal article" date="2003" name="Proc. Natl. Acad. Sci. U.S.A.">
        <title>A network of rice genes associated with stress response and seed development.</title>
        <authorList>
            <person name="Cooper B."/>
            <person name="Clarke J.D."/>
            <person name="Budworth P."/>
            <person name="Kreps J."/>
            <person name="Hutchison D."/>
            <person name="Park S."/>
            <person name="Guimil S."/>
            <person name="Dunn M."/>
            <person name="Luginbuehl P."/>
            <person name="Ellero C."/>
            <person name="Goff S.A."/>
            <person name="Glazebrook J."/>
        </authorList>
    </citation>
    <scope>NUCLEOTIDE SEQUENCE [MRNA]</scope>
    <source>
        <strain>cv. Nipponbare</strain>
    </source>
</reference>
<reference key="2">
    <citation type="journal article" date="2002" name="Nature">
        <title>Sequence and analysis of rice chromosome 4.</title>
        <authorList>
            <person name="Feng Q."/>
            <person name="Zhang Y."/>
            <person name="Hao P."/>
            <person name="Wang S."/>
            <person name="Fu G."/>
            <person name="Huang Y."/>
            <person name="Li Y."/>
            <person name="Zhu J."/>
            <person name="Liu Y."/>
            <person name="Hu X."/>
            <person name="Jia P."/>
            <person name="Zhang Y."/>
            <person name="Zhao Q."/>
            <person name="Ying K."/>
            <person name="Yu S."/>
            <person name="Tang Y."/>
            <person name="Weng Q."/>
            <person name="Zhang L."/>
            <person name="Lu Y."/>
            <person name="Mu J."/>
            <person name="Lu Y."/>
            <person name="Zhang L.S."/>
            <person name="Yu Z."/>
            <person name="Fan D."/>
            <person name="Liu X."/>
            <person name="Lu T."/>
            <person name="Li C."/>
            <person name="Wu Y."/>
            <person name="Sun T."/>
            <person name="Lei H."/>
            <person name="Li T."/>
            <person name="Hu H."/>
            <person name="Guan J."/>
            <person name="Wu M."/>
            <person name="Zhang R."/>
            <person name="Zhou B."/>
            <person name="Chen Z."/>
            <person name="Chen L."/>
            <person name="Jin Z."/>
            <person name="Wang R."/>
            <person name="Yin H."/>
            <person name="Cai Z."/>
            <person name="Ren S."/>
            <person name="Lv G."/>
            <person name="Gu W."/>
            <person name="Zhu G."/>
            <person name="Tu Y."/>
            <person name="Jia J."/>
            <person name="Zhang Y."/>
            <person name="Chen J."/>
            <person name="Kang H."/>
            <person name="Chen X."/>
            <person name="Shao C."/>
            <person name="Sun Y."/>
            <person name="Hu Q."/>
            <person name="Zhang X."/>
            <person name="Zhang W."/>
            <person name="Wang L."/>
            <person name="Ding C."/>
            <person name="Sheng H."/>
            <person name="Gu J."/>
            <person name="Chen S."/>
            <person name="Ni L."/>
            <person name="Zhu F."/>
            <person name="Chen W."/>
            <person name="Lan L."/>
            <person name="Lai Y."/>
            <person name="Cheng Z."/>
            <person name="Gu M."/>
            <person name="Jiang J."/>
            <person name="Li J."/>
            <person name="Hong G."/>
            <person name="Xue Y."/>
            <person name="Han B."/>
        </authorList>
    </citation>
    <scope>NUCLEOTIDE SEQUENCE [LARGE SCALE GENOMIC DNA]</scope>
    <source>
        <strain>cv. Nipponbare</strain>
    </source>
</reference>
<reference key="3">
    <citation type="journal article" date="2005" name="Nature">
        <title>The map-based sequence of the rice genome.</title>
        <authorList>
            <consortium name="International rice genome sequencing project (IRGSP)"/>
        </authorList>
    </citation>
    <scope>NUCLEOTIDE SEQUENCE [LARGE SCALE GENOMIC DNA]</scope>
    <source>
        <strain>cv. Nipponbare</strain>
    </source>
</reference>
<reference key="4">
    <citation type="journal article" date="2008" name="Nucleic Acids Res.">
        <title>The rice annotation project database (RAP-DB): 2008 update.</title>
        <authorList>
            <consortium name="The rice annotation project (RAP)"/>
        </authorList>
    </citation>
    <scope>GENOME REANNOTATION</scope>
    <source>
        <strain>cv. Nipponbare</strain>
    </source>
</reference>
<reference key="5">
    <citation type="journal article" date="2013" name="Rice">
        <title>Improvement of the Oryza sativa Nipponbare reference genome using next generation sequence and optical map data.</title>
        <authorList>
            <person name="Kawahara Y."/>
            <person name="de la Bastide M."/>
            <person name="Hamilton J.P."/>
            <person name="Kanamori H."/>
            <person name="McCombie W.R."/>
            <person name="Ouyang S."/>
            <person name="Schwartz D.C."/>
            <person name="Tanaka T."/>
            <person name="Wu J."/>
            <person name="Zhou S."/>
            <person name="Childs K.L."/>
            <person name="Davidson R.M."/>
            <person name="Lin H."/>
            <person name="Quesada-Ocampo L."/>
            <person name="Vaillancourt B."/>
            <person name="Sakai H."/>
            <person name="Lee S.S."/>
            <person name="Kim J."/>
            <person name="Numa H."/>
            <person name="Itoh T."/>
            <person name="Buell C.R."/>
            <person name="Matsumoto T."/>
        </authorList>
    </citation>
    <scope>GENOME REANNOTATION</scope>
    <source>
        <strain>cv. Nipponbare</strain>
    </source>
</reference>
<reference key="6">
    <citation type="journal article" date="2005" name="PLoS Biol.">
        <title>The genomes of Oryza sativa: a history of duplications.</title>
        <authorList>
            <person name="Yu J."/>
            <person name="Wang J."/>
            <person name="Lin W."/>
            <person name="Li S."/>
            <person name="Li H."/>
            <person name="Zhou J."/>
            <person name="Ni P."/>
            <person name="Dong W."/>
            <person name="Hu S."/>
            <person name="Zeng C."/>
            <person name="Zhang J."/>
            <person name="Zhang Y."/>
            <person name="Li R."/>
            <person name="Xu Z."/>
            <person name="Li S."/>
            <person name="Li X."/>
            <person name="Zheng H."/>
            <person name="Cong L."/>
            <person name="Lin L."/>
            <person name="Yin J."/>
            <person name="Geng J."/>
            <person name="Li G."/>
            <person name="Shi J."/>
            <person name="Liu J."/>
            <person name="Lv H."/>
            <person name="Li J."/>
            <person name="Wang J."/>
            <person name="Deng Y."/>
            <person name="Ran L."/>
            <person name="Shi X."/>
            <person name="Wang X."/>
            <person name="Wu Q."/>
            <person name="Li C."/>
            <person name="Ren X."/>
            <person name="Wang J."/>
            <person name="Wang X."/>
            <person name="Li D."/>
            <person name="Liu D."/>
            <person name="Zhang X."/>
            <person name="Ji Z."/>
            <person name="Zhao W."/>
            <person name="Sun Y."/>
            <person name="Zhang Z."/>
            <person name="Bao J."/>
            <person name="Han Y."/>
            <person name="Dong L."/>
            <person name="Ji J."/>
            <person name="Chen P."/>
            <person name="Wu S."/>
            <person name="Liu J."/>
            <person name="Xiao Y."/>
            <person name="Bu D."/>
            <person name="Tan J."/>
            <person name="Yang L."/>
            <person name="Ye C."/>
            <person name="Zhang J."/>
            <person name="Xu J."/>
            <person name="Zhou Y."/>
            <person name="Yu Y."/>
            <person name="Zhang B."/>
            <person name="Zhuang S."/>
            <person name="Wei H."/>
            <person name="Liu B."/>
            <person name="Lei M."/>
            <person name="Yu H."/>
            <person name="Li Y."/>
            <person name="Xu H."/>
            <person name="Wei S."/>
            <person name="He X."/>
            <person name="Fang L."/>
            <person name="Zhang Z."/>
            <person name="Zhang Y."/>
            <person name="Huang X."/>
            <person name="Su Z."/>
            <person name="Tong W."/>
            <person name="Li J."/>
            <person name="Tong Z."/>
            <person name="Li S."/>
            <person name="Ye J."/>
            <person name="Wang L."/>
            <person name="Fang L."/>
            <person name="Lei T."/>
            <person name="Chen C.-S."/>
            <person name="Chen H.-C."/>
            <person name="Xu Z."/>
            <person name="Li H."/>
            <person name="Huang H."/>
            <person name="Zhang F."/>
            <person name="Xu H."/>
            <person name="Li N."/>
            <person name="Zhao C."/>
            <person name="Li S."/>
            <person name="Dong L."/>
            <person name="Huang Y."/>
            <person name="Li L."/>
            <person name="Xi Y."/>
            <person name="Qi Q."/>
            <person name="Li W."/>
            <person name="Zhang B."/>
            <person name="Hu W."/>
            <person name="Zhang Y."/>
            <person name="Tian X."/>
            <person name="Jiao Y."/>
            <person name="Liang X."/>
            <person name="Jin J."/>
            <person name="Gao L."/>
            <person name="Zheng W."/>
            <person name="Hao B."/>
            <person name="Liu S.-M."/>
            <person name="Wang W."/>
            <person name="Yuan L."/>
            <person name="Cao M."/>
            <person name="McDermott J."/>
            <person name="Samudrala R."/>
            <person name="Wang J."/>
            <person name="Wong G.K.-S."/>
            <person name="Yang H."/>
        </authorList>
    </citation>
    <scope>NUCLEOTIDE SEQUENCE [LARGE SCALE GENOMIC DNA]</scope>
    <source>
        <strain>cv. Nipponbare</strain>
    </source>
</reference>
<reference key="7">
    <citation type="journal article" date="2008" name="Plant Mol. Biol.">
        <title>A genome-wide survey of HD-Zip genes in rice and analysis of drought-responsive family members.</title>
        <authorList>
            <person name="Agalou A."/>
            <person name="Purwantomo S."/>
            <person name="Oevernaes E."/>
            <person name="Johannesson H."/>
            <person name="Zhu X."/>
            <person name="Estiati A."/>
            <person name="de Kam R.J."/>
            <person name="Engstroem P."/>
            <person name="Slamet-Loedin I.H."/>
            <person name="Zhu Z."/>
            <person name="Wang M."/>
            <person name="Xiong L."/>
            <person name="Meijer A.H."/>
            <person name="Ouwerkerk P.B.F."/>
        </authorList>
    </citation>
    <scope>NUCLEOTIDE SEQUENCE [MRNA] OF 164-276</scope>
    <scope>TISSUE SPECIFICITY</scope>
    <scope>INDUCTION</scope>
    <scope>GENE FAMILY</scope>
    <scope>NOMENCLATURE</scope>
    <source>
        <strain>cv. Nipponbare</strain>
    </source>
</reference>
<evidence type="ECO:0000250" key="1"/>
<evidence type="ECO:0000255" key="2">
    <source>
        <dbReference type="PROSITE-ProRule" id="PRU00108"/>
    </source>
</evidence>
<evidence type="ECO:0000256" key="3">
    <source>
        <dbReference type="SAM" id="MobiDB-lite"/>
    </source>
</evidence>
<evidence type="ECO:0000269" key="4">
    <source>
    </source>
</evidence>
<evidence type="ECO:0000305" key="5"/>
<keyword id="KW-0238">DNA-binding</keyword>
<keyword id="KW-0371">Homeobox</keyword>
<keyword id="KW-0539">Nucleus</keyword>
<keyword id="KW-1185">Reference proteome</keyword>
<keyword id="KW-0804">Transcription</keyword>
<keyword id="KW-0805">Transcription regulation</keyword>
<comment type="function">
    <text evidence="1">Probable transcription factor.</text>
</comment>
<comment type="subcellular location">
    <subcellularLocation>
        <location evidence="5">Nucleus</location>
    </subcellularLocation>
</comment>
<comment type="tissue specificity">
    <text evidence="4">Expressed in seedlings, roots, stems, leaf sheaths and blades and panicles.</text>
</comment>
<comment type="induction">
    <text evidence="4">In leaves by drought stress.</text>
</comment>
<comment type="similarity">
    <text evidence="5">Belongs to the HD-ZIP homeobox family. Class I subfamily.</text>
</comment>
<comment type="sequence caution" evidence="5">
    <conflict type="erroneous initiation">
        <sequence resource="EMBL-CDS" id="BAF15360"/>
    </conflict>
    <text>Truncated N-terminus.</text>
</comment>
<comment type="sequence caution" evidence="5">
    <conflict type="erroneous initiation">
        <sequence resource="EMBL-CDS" id="CAD41267"/>
    </conflict>
    <text>Truncated N-terminus.</text>
</comment>